<comment type="function">
    <text evidence="1">The UvrABC repair system catalyzes the recognition and processing of DNA lesions. UvrC both incises the 5' and 3' sides of the lesion. The N-terminal half is responsible for the 3' incision and the C-terminal half is responsible for the 5' incision.</text>
</comment>
<comment type="subunit">
    <text evidence="1">Interacts with UvrB in an incision complex.</text>
</comment>
<comment type="subcellular location">
    <subcellularLocation>
        <location evidence="1">Cytoplasm</location>
    </subcellularLocation>
</comment>
<comment type="similarity">
    <text evidence="1">Belongs to the UvrC family.</text>
</comment>
<reference key="1">
    <citation type="journal article" date="2003" name="Proc. Natl. Acad. Sci. U.S.A.">
        <title>The complete genome sequence of the Arabidopsis and tomato pathogen Pseudomonas syringae pv. tomato DC3000.</title>
        <authorList>
            <person name="Buell C.R."/>
            <person name="Joardar V."/>
            <person name="Lindeberg M."/>
            <person name="Selengut J."/>
            <person name="Paulsen I.T."/>
            <person name="Gwinn M.L."/>
            <person name="Dodson R.J."/>
            <person name="DeBoy R.T."/>
            <person name="Durkin A.S."/>
            <person name="Kolonay J.F."/>
            <person name="Madupu R."/>
            <person name="Daugherty S.C."/>
            <person name="Brinkac L.M."/>
            <person name="Beanan M.J."/>
            <person name="Haft D.H."/>
            <person name="Nelson W.C."/>
            <person name="Davidsen T.M."/>
            <person name="Zafar N."/>
            <person name="Zhou L."/>
            <person name="Liu J."/>
            <person name="Yuan Q."/>
            <person name="Khouri H.M."/>
            <person name="Fedorova N.B."/>
            <person name="Tran B."/>
            <person name="Russell D."/>
            <person name="Berry K.J."/>
            <person name="Utterback T.R."/>
            <person name="Van Aken S.E."/>
            <person name="Feldblyum T.V."/>
            <person name="D'Ascenzo M."/>
            <person name="Deng W.-L."/>
            <person name="Ramos A.R."/>
            <person name="Alfano J.R."/>
            <person name="Cartinhour S."/>
            <person name="Chatterjee A.K."/>
            <person name="Delaney T.P."/>
            <person name="Lazarowitz S.G."/>
            <person name="Martin G.B."/>
            <person name="Schneider D.J."/>
            <person name="Tang X."/>
            <person name="Bender C.L."/>
            <person name="White O."/>
            <person name="Fraser C.M."/>
            <person name="Collmer A."/>
        </authorList>
    </citation>
    <scope>NUCLEOTIDE SEQUENCE [LARGE SCALE GENOMIC DNA]</scope>
    <source>
        <strain>ATCC BAA-871 / DC3000</strain>
    </source>
</reference>
<protein>
    <recommendedName>
        <fullName evidence="1">UvrABC system protein C</fullName>
        <shortName evidence="1">Protein UvrC</shortName>
    </recommendedName>
    <alternativeName>
        <fullName evidence="1">Excinuclease ABC subunit C</fullName>
    </alternativeName>
</protein>
<organism>
    <name type="scientific">Pseudomonas syringae pv. tomato (strain ATCC BAA-871 / DC3000)</name>
    <dbReference type="NCBI Taxonomy" id="223283"/>
    <lineage>
        <taxon>Bacteria</taxon>
        <taxon>Pseudomonadati</taxon>
        <taxon>Pseudomonadota</taxon>
        <taxon>Gammaproteobacteria</taxon>
        <taxon>Pseudomonadales</taxon>
        <taxon>Pseudomonadaceae</taxon>
        <taxon>Pseudomonas</taxon>
    </lineage>
</organism>
<feature type="chain" id="PRO_0000138329" description="UvrABC system protein C">
    <location>
        <begin position="1"/>
        <end position="607"/>
    </location>
</feature>
<feature type="domain" description="GIY-YIG" evidence="1">
    <location>
        <begin position="16"/>
        <end position="94"/>
    </location>
</feature>
<feature type="domain" description="UVR" evidence="1">
    <location>
        <begin position="203"/>
        <end position="238"/>
    </location>
</feature>
<name>UVRC_PSESM</name>
<proteinExistence type="inferred from homology"/>
<sequence>MTQTFDPSAFLATCSGRPGVYRMFDADATLLYVGKAKNLKKRLASYFRKTGHAPKTGALVARIAQIETTITNNETEALLLEQTLIKEWRPPYNILLRDDKSYPYVFLSDGTYPRLSIHRGAKKAKGRYFGPYPSAGAIRESLSLLQKTFQVRQCEDSFFKNRNRPCLQYQIKRCKGPCVGLVEPEVYAEDVRHSVMFLEGRSNALSDELNASMEKAAMALDFERAAELRDQVALLRRVQDQQSMDGGTGDVDVVAAFVNPGGACVHLISVRGGRVLGSKNFFPQVGIEEEVGEVMSAFLAQYFLGGVDRELPSEVIVNVVNEDFPALIDAIEESRGREMTISHRVRGTRARWQQLAVTNAEQALAARLANRQHVASRFEALAVVLNLDEPPMRLECYDISHSSGEATVASCVVFGPEGPIKSDYRRFNIEGVTAGDDYAAMHQALTRRYSRIKAGEGKLPDVLLVDGGKGQMSMARDVLNELQVPDLILLGVAKGTTRKAGFETLYLNDAAHEFTLPGDSPALHLIQQIRDEAHRFAITGHRARRGKTRRTSTLEGIAGVGPTRRRDLLKHFGGLQELSRASIDEIAKAPGISKKLAESIYANLHSE</sequence>
<accession>Q880X7</accession>
<evidence type="ECO:0000255" key="1">
    <source>
        <dbReference type="HAMAP-Rule" id="MF_00203"/>
    </source>
</evidence>
<keyword id="KW-0963">Cytoplasm</keyword>
<keyword id="KW-0227">DNA damage</keyword>
<keyword id="KW-0228">DNA excision</keyword>
<keyword id="KW-0234">DNA repair</keyword>
<keyword id="KW-0267">Excision nuclease</keyword>
<keyword id="KW-1185">Reference proteome</keyword>
<keyword id="KW-0742">SOS response</keyword>
<gene>
    <name evidence="1" type="primary">uvrC</name>
    <name type="ordered locus">PSPTO_3023</name>
</gene>
<dbReference type="EMBL" id="AE016853">
    <property type="protein sequence ID" value="AAO56513.1"/>
    <property type="molecule type" value="Genomic_DNA"/>
</dbReference>
<dbReference type="RefSeq" id="NP_792818.1">
    <property type="nucleotide sequence ID" value="NC_004578.1"/>
</dbReference>
<dbReference type="RefSeq" id="WP_005764425.1">
    <property type="nucleotide sequence ID" value="NC_004578.1"/>
</dbReference>
<dbReference type="SMR" id="Q880X7"/>
<dbReference type="STRING" id="223283.PSPTO_3023"/>
<dbReference type="GeneID" id="1184680"/>
<dbReference type="KEGG" id="pst:PSPTO_3023"/>
<dbReference type="PATRIC" id="fig|223283.9.peg.3086"/>
<dbReference type="eggNOG" id="COG0322">
    <property type="taxonomic scope" value="Bacteria"/>
</dbReference>
<dbReference type="HOGENOM" id="CLU_014841_3_0_6"/>
<dbReference type="OrthoDB" id="9804933at2"/>
<dbReference type="PhylomeDB" id="Q880X7"/>
<dbReference type="PHI-base" id="PHI:9687"/>
<dbReference type="Proteomes" id="UP000002515">
    <property type="component" value="Chromosome"/>
</dbReference>
<dbReference type="GO" id="GO:0005737">
    <property type="term" value="C:cytoplasm"/>
    <property type="evidence" value="ECO:0007669"/>
    <property type="project" value="UniProtKB-SubCell"/>
</dbReference>
<dbReference type="GO" id="GO:0009380">
    <property type="term" value="C:excinuclease repair complex"/>
    <property type="evidence" value="ECO:0007669"/>
    <property type="project" value="InterPro"/>
</dbReference>
<dbReference type="GO" id="GO:0003677">
    <property type="term" value="F:DNA binding"/>
    <property type="evidence" value="ECO:0007669"/>
    <property type="project" value="UniProtKB-UniRule"/>
</dbReference>
<dbReference type="GO" id="GO:0009381">
    <property type="term" value="F:excinuclease ABC activity"/>
    <property type="evidence" value="ECO:0007669"/>
    <property type="project" value="UniProtKB-UniRule"/>
</dbReference>
<dbReference type="GO" id="GO:0006289">
    <property type="term" value="P:nucleotide-excision repair"/>
    <property type="evidence" value="ECO:0007669"/>
    <property type="project" value="UniProtKB-UniRule"/>
</dbReference>
<dbReference type="GO" id="GO:0009432">
    <property type="term" value="P:SOS response"/>
    <property type="evidence" value="ECO:0007669"/>
    <property type="project" value="UniProtKB-UniRule"/>
</dbReference>
<dbReference type="CDD" id="cd10434">
    <property type="entry name" value="GIY-YIG_UvrC_Cho"/>
    <property type="match status" value="1"/>
</dbReference>
<dbReference type="FunFam" id="1.10.150.20:FF:000005">
    <property type="entry name" value="UvrABC system protein C"/>
    <property type="match status" value="1"/>
</dbReference>
<dbReference type="FunFam" id="3.30.420.340:FF:000001">
    <property type="entry name" value="UvrABC system protein C"/>
    <property type="match status" value="1"/>
</dbReference>
<dbReference type="FunFam" id="3.40.1440.10:FF:000001">
    <property type="entry name" value="UvrABC system protein C"/>
    <property type="match status" value="1"/>
</dbReference>
<dbReference type="Gene3D" id="1.10.150.20">
    <property type="entry name" value="5' to 3' exonuclease, C-terminal subdomain"/>
    <property type="match status" value="1"/>
</dbReference>
<dbReference type="Gene3D" id="3.40.1440.10">
    <property type="entry name" value="GIY-YIG endonuclease"/>
    <property type="match status" value="1"/>
</dbReference>
<dbReference type="Gene3D" id="4.10.860.10">
    <property type="entry name" value="UVR domain"/>
    <property type="match status" value="1"/>
</dbReference>
<dbReference type="Gene3D" id="3.30.420.340">
    <property type="entry name" value="UvrC, RNAse H endonuclease domain"/>
    <property type="match status" value="1"/>
</dbReference>
<dbReference type="HAMAP" id="MF_00203">
    <property type="entry name" value="UvrC"/>
    <property type="match status" value="1"/>
</dbReference>
<dbReference type="InterPro" id="IPR000305">
    <property type="entry name" value="GIY-YIG_endonuc"/>
</dbReference>
<dbReference type="InterPro" id="IPR035901">
    <property type="entry name" value="GIY-YIG_endonuc_sf"/>
</dbReference>
<dbReference type="InterPro" id="IPR047296">
    <property type="entry name" value="GIY-YIG_UvrC_Cho"/>
</dbReference>
<dbReference type="InterPro" id="IPR003583">
    <property type="entry name" value="Hlx-hairpin-Hlx_DNA-bd_motif"/>
</dbReference>
<dbReference type="InterPro" id="IPR010994">
    <property type="entry name" value="RuvA_2-like"/>
</dbReference>
<dbReference type="InterPro" id="IPR001943">
    <property type="entry name" value="UVR_dom"/>
</dbReference>
<dbReference type="InterPro" id="IPR036876">
    <property type="entry name" value="UVR_dom_sf"/>
</dbReference>
<dbReference type="InterPro" id="IPR050066">
    <property type="entry name" value="UvrABC_protein_C"/>
</dbReference>
<dbReference type="InterPro" id="IPR004791">
    <property type="entry name" value="UvrC"/>
</dbReference>
<dbReference type="InterPro" id="IPR001162">
    <property type="entry name" value="UvrC_RNase_H_dom"/>
</dbReference>
<dbReference type="InterPro" id="IPR038476">
    <property type="entry name" value="UvrC_RNase_H_dom_sf"/>
</dbReference>
<dbReference type="NCBIfam" id="NF001824">
    <property type="entry name" value="PRK00558.1-5"/>
    <property type="match status" value="1"/>
</dbReference>
<dbReference type="NCBIfam" id="TIGR00194">
    <property type="entry name" value="uvrC"/>
    <property type="match status" value="1"/>
</dbReference>
<dbReference type="PANTHER" id="PTHR30562:SF1">
    <property type="entry name" value="UVRABC SYSTEM PROTEIN C"/>
    <property type="match status" value="1"/>
</dbReference>
<dbReference type="PANTHER" id="PTHR30562">
    <property type="entry name" value="UVRC/OXIDOREDUCTASE"/>
    <property type="match status" value="1"/>
</dbReference>
<dbReference type="Pfam" id="PF01541">
    <property type="entry name" value="GIY-YIG"/>
    <property type="match status" value="1"/>
</dbReference>
<dbReference type="Pfam" id="PF14520">
    <property type="entry name" value="HHH_5"/>
    <property type="match status" value="1"/>
</dbReference>
<dbReference type="Pfam" id="PF02151">
    <property type="entry name" value="UVR"/>
    <property type="match status" value="1"/>
</dbReference>
<dbReference type="Pfam" id="PF22920">
    <property type="entry name" value="UvrC_RNaseH"/>
    <property type="match status" value="1"/>
</dbReference>
<dbReference type="Pfam" id="PF08459">
    <property type="entry name" value="UvrC_RNaseH_dom"/>
    <property type="match status" value="1"/>
</dbReference>
<dbReference type="SMART" id="SM00465">
    <property type="entry name" value="GIYc"/>
    <property type="match status" value="1"/>
</dbReference>
<dbReference type="SMART" id="SM00278">
    <property type="entry name" value="HhH1"/>
    <property type="match status" value="2"/>
</dbReference>
<dbReference type="SUPFAM" id="SSF46600">
    <property type="entry name" value="C-terminal UvrC-binding domain of UvrB"/>
    <property type="match status" value="1"/>
</dbReference>
<dbReference type="SUPFAM" id="SSF82771">
    <property type="entry name" value="GIY-YIG endonuclease"/>
    <property type="match status" value="1"/>
</dbReference>
<dbReference type="SUPFAM" id="SSF47781">
    <property type="entry name" value="RuvA domain 2-like"/>
    <property type="match status" value="1"/>
</dbReference>
<dbReference type="PROSITE" id="PS50164">
    <property type="entry name" value="GIY_YIG"/>
    <property type="match status" value="1"/>
</dbReference>
<dbReference type="PROSITE" id="PS50151">
    <property type="entry name" value="UVR"/>
    <property type="match status" value="1"/>
</dbReference>
<dbReference type="PROSITE" id="PS50165">
    <property type="entry name" value="UVRC"/>
    <property type="match status" value="1"/>
</dbReference>